<dbReference type="EC" id="3.2.1.52"/>
<dbReference type="EMBL" id="L43594">
    <property type="protein sequence ID" value="AAB03808.1"/>
    <property type="molecule type" value="Genomic_DNA"/>
</dbReference>
<dbReference type="PIR" id="JC4732">
    <property type="entry name" value="JC4732"/>
</dbReference>
<dbReference type="PDB" id="1C7S">
    <property type="method" value="X-ray"/>
    <property type="resolution" value="1.80 A"/>
    <property type="chains" value="A=28-885"/>
</dbReference>
<dbReference type="PDB" id="1C7T">
    <property type="method" value="X-ray"/>
    <property type="resolution" value="1.90 A"/>
    <property type="chains" value="A=28-885"/>
</dbReference>
<dbReference type="PDB" id="1QBA">
    <property type="method" value="X-ray"/>
    <property type="resolution" value="1.85 A"/>
    <property type="chains" value="A=28-885"/>
</dbReference>
<dbReference type="PDB" id="1QBB">
    <property type="method" value="X-ray"/>
    <property type="resolution" value="2.00 A"/>
    <property type="chains" value="A=28-885"/>
</dbReference>
<dbReference type="PDBsum" id="1C7S"/>
<dbReference type="PDBsum" id="1C7T"/>
<dbReference type="PDBsum" id="1QBA"/>
<dbReference type="PDBsum" id="1QBB"/>
<dbReference type="SMR" id="Q54468"/>
<dbReference type="STRING" id="273526.SMDB11_0477"/>
<dbReference type="DrugBank" id="DB03013">
    <property type="generic name" value="N-acetyl-beta-D-glucosaminyl-(1-&gt;4)-N-acetyl-beta-D-glucosamine"/>
</dbReference>
<dbReference type="CAZy" id="GH20">
    <property type="family name" value="Glycoside Hydrolase Family 20"/>
</dbReference>
<dbReference type="BioCyc" id="MetaCyc:MONOMER-17688"/>
<dbReference type="UniPathway" id="UPA00349"/>
<dbReference type="EvolutionaryTrace" id="Q54468"/>
<dbReference type="GO" id="GO:0016020">
    <property type="term" value="C:membrane"/>
    <property type="evidence" value="ECO:0007669"/>
    <property type="project" value="TreeGrafter"/>
</dbReference>
<dbReference type="GO" id="GO:0042597">
    <property type="term" value="C:periplasmic space"/>
    <property type="evidence" value="ECO:0007669"/>
    <property type="project" value="UniProtKB-SubCell"/>
</dbReference>
<dbReference type="GO" id="GO:0004563">
    <property type="term" value="F:beta-N-acetylhexosaminidase activity"/>
    <property type="evidence" value="ECO:0007669"/>
    <property type="project" value="UniProtKB-EC"/>
</dbReference>
<dbReference type="GO" id="GO:0030247">
    <property type="term" value="F:polysaccharide binding"/>
    <property type="evidence" value="ECO:0007669"/>
    <property type="project" value="InterPro"/>
</dbReference>
<dbReference type="GO" id="GO:0006032">
    <property type="term" value="P:chitin catabolic process"/>
    <property type="evidence" value="ECO:0007669"/>
    <property type="project" value="UniProtKB-UniPathway"/>
</dbReference>
<dbReference type="GO" id="GO:0030203">
    <property type="term" value="P:glycosaminoglycan metabolic process"/>
    <property type="evidence" value="ECO:0007669"/>
    <property type="project" value="TreeGrafter"/>
</dbReference>
<dbReference type="GO" id="GO:0000272">
    <property type="term" value="P:polysaccharide catabolic process"/>
    <property type="evidence" value="ECO:0007669"/>
    <property type="project" value="UniProtKB-KW"/>
</dbReference>
<dbReference type="CDD" id="cd02847">
    <property type="entry name" value="E_set_Chitobiase_C"/>
    <property type="match status" value="1"/>
</dbReference>
<dbReference type="CDD" id="cd06569">
    <property type="entry name" value="GH20_Sm-chitobiase-like"/>
    <property type="match status" value="1"/>
</dbReference>
<dbReference type="Gene3D" id="2.60.40.290">
    <property type="match status" value="1"/>
</dbReference>
<dbReference type="Gene3D" id="3.30.379.10">
    <property type="entry name" value="Chitobiase/beta-hexosaminidase domain 2-like"/>
    <property type="match status" value="1"/>
</dbReference>
<dbReference type="Gene3D" id="3.20.20.80">
    <property type="entry name" value="Glycosidases"/>
    <property type="match status" value="1"/>
</dbReference>
<dbReference type="Gene3D" id="2.60.40.10">
    <property type="entry name" value="Immunoglobulins"/>
    <property type="match status" value="1"/>
</dbReference>
<dbReference type="InterPro" id="IPR025705">
    <property type="entry name" value="Beta_hexosaminidase_sua/sub"/>
</dbReference>
<dbReference type="InterPro" id="IPR008965">
    <property type="entry name" value="CBM2/CBM3_carb-bd_dom_sf"/>
</dbReference>
<dbReference type="InterPro" id="IPR012291">
    <property type="entry name" value="CBM2_carb-bd_dom_sf"/>
</dbReference>
<dbReference type="InterPro" id="IPR004866">
    <property type="entry name" value="CHB/HEX_N_dom"/>
</dbReference>
<dbReference type="InterPro" id="IPR004867">
    <property type="entry name" value="CHB_C_dom"/>
</dbReference>
<dbReference type="InterPro" id="IPR015883">
    <property type="entry name" value="Glyco_hydro_20_cat"/>
</dbReference>
<dbReference type="InterPro" id="IPR017853">
    <property type="entry name" value="Glycoside_hydrolase_SF"/>
</dbReference>
<dbReference type="InterPro" id="IPR029018">
    <property type="entry name" value="Hex-like_dom2"/>
</dbReference>
<dbReference type="InterPro" id="IPR015882">
    <property type="entry name" value="HEX_bac_N"/>
</dbReference>
<dbReference type="InterPro" id="IPR013783">
    <property type="entry name" value="Ig-like_fold"/>
</dbReference>
<dbReference type="InterPro" id="IPR014756">
    <property type="entry name" value="Ig_E-set"/>
</dbReference>
<dbReference type="PANTHER" id="PTHR22600">
    <property type="entry name" value="BETA-HEXOSAMINIDASE"/>
    <property type="match status" value="1"/>
</dbReference>
<dbReference type="PANTHER" id="PTHR22600:SF57">
    <property type="entry name" value="BETA-N-ACETYLHEXOSAMINIDASE"/>
    <property type="match status" value="1"/>
</dbReference>
<dbReference type="Pfam" id="PF03173">
    <property type="entry name" value="CHB_HEX"/>
    <property type="match status" value="1"/>
</dbReference>
<dbReference type="Pfam" id="PF03174">
    <property type="entry name" value="CHB_HEX_C"/>
    <property type="match status" value="1"/>
</dbReference>
<dbReference type="Pfam" id="PF00728">
    <property type="entry name" value="Glyco_hydro_20"/>
    <property type="match status" value="1"/>
</dbReference>
<dbReference type="Pfam" id="PF02838">
    <property type="entry name" value="Glyco_hydro_20b"/>
    <property type="match status" value="1"/>
</dbReference>
<dbReference type="PRINTS" id="PR00738">
    <property type="entry name" value="GLHYDRLASE20"/>
</dbReference>
<dbReference type="SMART" id="SM01081">
    <property type="entry name" value="CHB_HEX"/>
    <property type="match status" value="1"/>
</dbReference>
<dbReference type="SUPFAM" id="SSF51445">
    <property type="entry name" value="(Trans)glycosidases"/>
    <property type="match status" value="1"/>
</dbReference>
<dbReference type="SUPFAM" id="SSF55545">
    <property type="entry name" value="beta-N-acetylhexosaminidase-like domain"/>
    <property type="match status" value="1"/>
</dbReference>
<dbReference type="SUPFAM" id="SSF49384">
    <property type="entry name" value="Carbohydrate-binding domain"/>
    <property type="match status" value="1"/>
</dbReference>
<dbReference type="SUPFAM" id="SSF81296">
    <property type="entry name" value="E set domains"/>
    <property type="match status" value="1"/>
</dbReference>
<gene>
    <name type="primary">chb</name>
</gene>
<feature type="signal peptide">
    <location>
        <begin position="1"/>
        <end position="27"/>
    </location>
</feature>
<feature type="chain" id="PRO_0000012018" description="Chitobiase">
    <location>
        <begin position="28"/>
        <end position="885"/>
    </location>
</feature>
<feature type="region of interest" description="Disordered" evidence="1">
    <location>
        <begin position="866"/>
        <end position="885"/>
    </location>
</feature>
<feature type="compositionally biased region" description="Basic and acidic residues" evidence="1">
    <location>
        <begin position="875"/>
        <end position="885"/>
    </location>
</feature>
<feature type="active site" description="Proton donor">
    <location>
        <position position="540"/>
    </location>
</feature>
<feature type="disulfide bond">
    <location>
        <begin position="56"/>
        <end position="66"/>
    </location>
</feature>
<feature type="disulfide bond">
    <location>
        <begin position="400"/>
        <end position="408"/>
    </location>
</feature>
<feature type="disulfide bond">
    <location>
        <begin position="505"/>
        <end position="578"/>
    </location>
</feature>
<feature type="helix" evidence="3">
    <location>
        <begin position="29"/>
        <end position="35"/>
    </location>
</feature>
<feature type="strand" evidence="3">
    <location>
        <begin position="39"/>
        <end position="46"/>
    </location>
</feature>
<feature type="helix" evidence="3">
    <location>
        <begin position="49"/>
        <end position="52"/>
    </location>
</feature>
<feature type="turn" evidence="3">
    <location>
        <begin position="56"/>
        <end position="60"/>
    </location>
</feature>
<feature type="helix" evidence="3">
    <location>
        <begin position="62"/>
        <end position="64"/>
    </location>
</feature>
<feature type="strand" evidence="3">
    <location>
        <begin position="66"/>
        <end position="75"/>
    </location>
</feature>
<feature type="strand" evidence="3">
    <location>
        <begin position="86"/>
        <end position="90"/>
    </location>
</feature>
<feature type="strand" evidence="3">
    <location>
        <begin position="95"/>
        <end position="98"/>
    </location>
</feature>
<feature type="strand" evidence="3">
    <location>
        <begin position="103"/>
        <end position="107"/>
    </location>
</feature>
<feature type="strand" evidence="3">
    <location>
        <begin position="112"/>
        <end position="117"/>
    </location>
</feature>
<feature type="strand" evidence="3">
    <location>
        <begin position="128"/>
        <end position="138"/>
    </location>
</feature>
<feature type="helix" evidence="3">
    <location>
        <begin position="143"/>
        <end position="145"/>
    </location>
</feature>
<feature type="strand" evidence="3">
    <location>
        <begin position="151"/>
        <end position="153"/>
    </location>
</feature>
<feature type="helix" evidence="3">
    <location>
        <begin position="163"/>
        <end position="165"/>
    </location>
</feature>
<feature type="strand" evidence="3">
    <location>
        <begin position="166"/>
        <end position="168"/>
    </location>
</feature>
<feature type="helix" evidence="3">
    <location>
        <begin position="170"/>
        <end position="172"/>
    </location>
</feature>
<feature type="turn" evidence="3">
    <location>
        <begin position="179"/>
        <end position="182"/>
    </location>
</feature>
<feature type="helix" evidence="3">
    <location>
        <begin position="195"/>
        <end position="201"/>
    </location>
</feature>
<feature type="turn" evidence="3">
    <location>
        <begin position="202"/>
        <end position="204"/>
    </location>
</feature>
<feature type="helix" evidence="3">
    <location>
        <begin position="210"/>
        <end position="213"/>
    </location>
</feature>
<feature type="strand" evidence="3">
    <location>
        <begin position="222"/>
        <end position="232"/>
    </location>
</feature>
<feature type="strand" evidence="3">
    <location>
        <begin position="237"/>
        <end position="239"/>
    </location>
</feature>
<feature type="helix" evidence="3">
    <location>
        <begin position="246"/>
        <end position="258"/>
    </location>
</feature>
<feature type="strand" evidence="3">
    <location>
        <begin position="267"/>
        <end position="274"/>
    </location>
</feature>
<feature type="helix" evidence="3">
    <location>
        <begin position="276"/>
        <end position="278"/>
    </location>
</feature>
<feature type="helix" evidence="3">
    <location>
        <begin position="281"/>
        <end position="283"/>
    </location>
</feature>
<feature type="strand" evidence="3">
    <location>
        <begin position="289"/>
        <end position="293"/>
    </location>
</feature>
<feature type="strand" evidence="3">
    <location>
        <begin position="298"/>
        <end position="304"/>
    </location>
</feature>
<feature type="helix" evidence="3">
    <location>
        <begin position="305"/>
        <end position="318"/>
    </location>
</feature>
<feature type="strand" evidence="5">
    <location>
        <begin position="321"/>
        <end position="323"/>
    </location>
</feature>
<feature type="strand" evidence="3">
    <location>
        <begin position="326"/>
        <end position="334"/>
    </location>
</feature>
<feature type="strand" evidence="3">
    <location>
        <begin position="339"/>
        <end position="346"/>
    </location>
</feature>
<feature type="strand" evidence="3">
    <location>
        <begin position="348"/>
        <end position="350"/>
    </location>
</feature>
<feature type="helix" evidence="3">
    <location>
        <begin position="354"/>
        <end position="366"/>
    </location>
</feature>
<feature type="strand" evidence="3">
    <location>
        <begin position="371"/>
        <end position="375"/>
    </location>
</feature>
<feature type="helix" evidence="3">
    <location>
        <begin position="391"/>
        <end position="394"/>
    </location>
</feature>
<feature type="turn" evidence="3">
    <location>
        <begin position="395"/>
        <end position="397"/>
    </location>
</feature>
<feature type="strand" evidence="3">
    <location>
        <begin position="406"/>
        <end position="409"/>
    </location>
</feature>
<feature type="helix" evidence="3">
    <location>
        <begin position="426"/>
        <end position="437"/>
    </location>
</feature>
<feature type="turn" evidence="3">
    <location>
        <begin position="438"/>
        <end position="440"/>
    </location>
</feature>
<feature type="strand" evidence="3">
    <location>
        <begin position="442"/>
        <end position="452"/>
    </location>
</feature>
<feature type="helix" evidence="3">
    <location>
        <begin position="454"/>
        <end position="469"/>
    </location>
</feature>
<feature type="helix" evidence="3">
    <location>
        <begin position="473"/>
        <end position="478"/>
    </location>
</feature>
<feature type="helix" evidence="3">
    <location>
        <begin position="498"/>
        <end position="500"/>
    </location>
</feature>
<feature type="helix" evidence="3">
    <location>
        <begin position="507"/>
        <end position="526"/>
    </location>
</feature>
<feature type="strand" evidence="3">
    <location>
        <begin position="534"/>
        <end position="537"/>
    </location>
</feature>
<feature type="helix" evidence="3">
    <location>
        <begin position="544"/>
        <end position="546"/>
    </location>
</feature>
<feature type="strand" evidence="3">
    <location>
        <begin position="550"/>
        <end position="552"/>
    </location>
</feature>
<feature type="strand" evidence="3">
    <location>
        <begin position="560"/>
        <end position="563"/>
    </location>
</feature>
<feature type="helix" evidence="5">
    <location>
        <begin position="565"/>
        <end position="567"/>
    </location>
</feature>
<feature type="turn" evidence="3">
    <location>
        <begin position="571"/>
        <end position="574"/>
    </location>
</feature>
<feature type="helix" evidence="3">
    <location>
        <begin position="576"/>
        <end position="583"/>
    </location>
</feature>
<feature type="strand" evidence="3">
    <location>
        <begin position="586"/>
        <end position="589"/>
    </location>
</feature>
<feature type="helix" evidence="3">
    <location>
        <begin position="590"/>
        <end position="592"/>
    </location>
</feature>
<feature type="helix" evidence="3">
    <location>
        <begin position="593"/>
        <end position="607"/>
    </location>
</feature>
<feature type="strand" evidence="3">
    <location>
        <begin position="612"/>
        <end position="616"/>
    </location>
</feature>
<feature type="helix" evidence="3">
    <location>
        <begin position="617"/>
        <end position="620"/>
    </location>
</feature>
<feature type="strand" evidence="4">
    <location>
        <begin position="623"/>
        <end position="625"/>
    </location>
</feature>
<feature type="helix" evidence="3">
    <location>
        <begin position="626"/>
        <end position="628"/>
    </location>
</feature>
<feature type="strand" evidence="3">
    <location>
        <begin position="629"/>
        <end position="638"/>
    </location>
</feature>
<feature type="turn" evidence="3">
    <location>
        <begin position="642"/>
        <end position="645"/>
    </location>
</feature>
<feature type="helix" evidence="3">
    <location>
        <begin position="646"/>
        <end position="655"/>
    </location>
</feature>
<feature type="strand" evidence="3">
    <location>
        <begin position="659"/>
        <end position="662"/>
    </location>
</feature>
<feature type="helix" evidence="3">
    <location>
        <begin position="665"/>
        <end position="668"/>
    </location>
</feature>
<feature type="strand" evidence="3">
    <location>
        <begin position="674"/>
        <end position="676"/>
    </location>
</feature>
<feature type="helix" evidence="3">
    <location>
        <begin position="692"/>
        <end position="697"/>
    </location>
</feature>
<feature type="strand" evidence="4">
    <location>
        <begin position="700"/>
        <end position="702"/>
    </location>
</feature>
<feature type="helix" evidence="3">
    <location>
        <begin position="703"/>
        <end position="708"/>
    </location>
</feature>
<feature type="strand" evidence="5">
    <location>
        <begin position="719"/>
        <end position="721"/>
    </location>
</feature>
<feature type="strand" evidence="3">
    <location>
        <begin position="730"/>
        <end position="736"/>
    </location>
</feature>
<feature type="helix" evidence="3">
    <location>
        <begin position="744"/>
        <end position="751"/>
    </location>
</feature>
<feature type="helix" evidence="3">
    <location>
        <begin position="754"/>
        <end position="763"/>
    </location>
</feature>
<feature type="strand" evidence="5">
    <location>
        <begin position="777"/>
        <end position="779"/>
    </location>
</feature>
<feature type="turn" evidence="3">
    <location>
        <begin position="780"/>
        <end position="782"/>
    </location>
</feature>
<feature type="helix" evidence="3">
    <location>
        <begin position="788"/>
        <end position="804"/>
    </location>
</feature>
<feature type="helix" evidence="3">
    <location>
        <begin position="806"/>
        <end position="812"/>
    </location>
</feature>
<feature type="strand" evidence="3">
    <location>
        <begin position="823"/>
        <end position="827"/>
    </location>
</feature>
<feature type="strand" evidence="3">
    <location>
        <begin position="830"/>
        <end position="834"/>
    </location>
</feature>
<feature type="strand" evidence="3">
    <location>
        <begin position="840"/>
        <end position="847"/>
    </location>
</feature>
<feature type="helix" evidence="3">
    <location>
        <begin position="857"/>
        <end position="859"/>
    </location>
</feature>
<feature type="strand" evidence="3">
    <location>
        <begin position="868"/>
        <end position="872"/>
    </location>
</feature>
<accession>Q54468</accession>
<protein>
    <recommendedName>
        <fullName>Chitobiase</fullName>
        <ecNumber>3.2.1.52</ecNumber>
    </recommendedName>
    <alternativeName>
        <fullName>Beta-N-acetylhexosaminidase</fullName>
    </alternativeName>
    <alternativeName>
        <fullName>N-acetyl-beta-glucosaminidase</fullName>
    </alternativeName>
</protein>
<sequence>MNAFKLSALARLTATMGFLGGMGSAMADQQLVDQLSQLKLNVKMLDNRAGENGVDCAALGADWASCNRVLFTLSNDGQAIDGKDWVIYFHSPRQTLRVDNDQFKIAHLTGDLYKLEPTAKFSGFPAGKAVEIPVVAEYWQLFRNDFLPRWYATSGDAKPKMLANTDTENLDQFVAPFTGDQWKRTKDDKNILMTPASRFVSNADLQTLPAGALRGKIVPTPMQVKVHAQDADLRKGVALDLSTLVKPAADVVSQRFALLGVPVQTNGYPIKTDIQPGKFKGAMAVSGAYELKIGKKEAQVIGFDQAGVFYGLQSILSLVPSDGSGKIATLDASDAPRFPYRGIFLDVARNFHKKDAVLRLLDQMAAYKLNKFHFHLSDDEGWRIEIPGLPELTEVGGQRCHDLSETTCLLPQYGQGPDVYGGFFSRQDYIDIIKYAQARQIEVIPEIDMPAHARAAVVSMEARYKKLHAAGKEQEANEFRLVDPTDTSNTTSVQFFNRQSYLNPCLDSSQRFVDKVIGEIAQMHKEAGQPIKTWHFGGDEAKNIRLGAGYTDKAKPEPGKGIIDQSNEDKPWAKSQVCQTMIKEGKVADMEHLPSYFGQEVSKLVKAHGIDRMQAWQDGLKDAESSKAFATSRVGVNFWDTLYWGGFDSVNDWANKGYEVVVSNPDYVYMDFPYEVNPDERGYYWGTRFSDERKVFSFAPDNMPQNAETSVDRDGNHFNAKSDKPWPGAYGLSAQLWSETQRTDPQMEYMIFPRALSVAERSWHRAGWEQDYRAGREYKGGETHFVDTQALEKDWLRFANILGQRELAKLDKGGVAYRLPVPGARVAAGKLEANIALPGLGIEYSTDGGKQWQRYDAKAKPAVSGEVQVRSVSPDGKRYSRAEKV</sequence>
<name>CHB_SERMA</name>
<evidence type="ECO:0000256" key="1">
    <source>
        <dbReference type="SAM" id="MobiDB-lite"/>
    </source>
</evidence>
<evidence type="ECO:0000305" key="2"/>
<evidence type="ECO:0007829" key="3">
    <source>
        <dbReference type="PDB" id="1C7S"/>
    </source>
</evidence>
<evidence type="ECO:0007829" key="4">
    <source>
        <dbReference type="PDB" id="1C7T"/>
    </source>
</evidence>
<evidence type="ECO:0007829" key="5">
    <source>
        <dbReference type="PDB" id="1QBA"/>
    </source>
</evidence>
<comment type="function">
    <text>Digests the beta-1,4-glycosidic bonds in N-acetylglucosamine (GlcNAc) oligomers (mainly dimers).</text>
</comment>
<comment type="catalytic activity">
    <reaction>
        <text>Hydrolysis of terminal non-reducing N-acetyl-D-hexosamine residues in N-acetyl-beta-D-hexosaminides.</text>
        <dbReference type="EC" id="3.2.1.52"/>
    </reaction>
</comment>
<comment type="pathway">
    <text>Glycan degradation; chitin degradation.</text>
</comment>
<comment type="subunit">
    <text>Monomer.</text>
</comment>
<comment type="subcellular location">
    <subcellularLocation>
        <location>Periplasm</location>
    </subcellularLocation>
</comment>
<comment type="similarity">
    <text evidence="2">Belongs to the glycosyl hydrolase 20 family.</text>
</comment>
<organism>
    <name type="scientific">Serratia marcescens</name>
    <dbReference type="NCBI Taxonomy" id="615"/>
    <lineage>
        <taxon>Bacteria</taxon>
        <taxon>Pseudomonadati</taxon>
        <taxon>Pseudomonadota</taxon>
        <taxon>Gammaproteobacteria</taxon>
        <taxon>Enterobacterales</taxon>
        <taxon>Yersiniaceae</taxon>
        <taxon>Serratia</taxon>
    </lineage>
</organism>
<proteinExistence type="evidence at protein level"/>
<keyword id="KW-0002">3D-structure</keyword>
<keyword id="KW-0119">Carbohydrate metabolism</keyword>
<keyword id="KW-0146">Chitin degradation</keyword>
<keyword id="KW-0903">Direct protein sequencing</keyword>
<keyword id="KW-1015">Disulfide bond</keyword>
<keyword id="KW-0326">Glycosidase</keyword>
<keyword id="KW-0378">Hydrolase</keyword>
<keyword id="KW-0574">Periplasm</keyword>
<keyword id="KW-0624">Polysaccharide degradation</keyword>
<keyword id="KW-0732">Signal</keyword>
<reference key="1">
    <citation type="journal article" date="1996" name="Gene">
        <title>N-acetylglucosaminidase (chitobiase) from Serratia marcescens: gene sequence, and protein production and purification in Escherichia coli.</title>
        <authorList>
            <person name="Tews I."/>
            <person name="Vincentelli R."/>
            <person name="Vorgias C.E."/>
        </authorList>
    </citation>
    <scope>NUCLEOTIDE SEQUENCE [GENOMIC DNA]</scope>
    <scope>PARTIAL PROTEIN SEQUENCE</scope>
</reference>
<reference key="2">
    <citation type="journal article" date="1996" name="Nat. Struct. Biol.">
        <title>Bacterial chitobiase structure provides insight into catalytic mechanism and the basis of Tay-Sachs disease.</title>
        <authorList>
            <person name="Tews I."/>
            <person name="Perrakis A."/>
            <person name="Oppenheim A."/>
            <person name="Dauter Z."/>
            <person name="Wilson K.S."/>
            <person name="Vorgias C.E."/>
        </authorList>
    </citation>
    <scope>X-RAY CRYSTALLOGRAPHY (1.85 ANGSTROMS)</scope>
</reference>